<name>LPLA_SHIDS</name>
<comment type="function">
    <text evidence="1">Catalyzes both the ATP-dependent activation of exogenously supplied lipoate to lipoyl-AMP and the transfer of the activated lipoyl onto the lipoyl domains of lipoate-dependent enzymes.</text>
</comment>
<comment type="catalytic activity">
    <reaction evidence="1">
        <text>L-lysyl-[lipoyl-carrier protein] + (R)-lipoate + ATP = N(6)-[(R)-lipoyl]-L-lysyl-[lipoyl-carrier protein] + AMP + diphosphate + H(+)</text>
        <dbReference type="Rhea" id="RHEA:49288"/>
        <dbReference type="Rhea" id="RHEA-COMP:10500"/>
        <dbReference type="Rhea" id="RHEA-COMP:10502"/>
        <dbReference type="ChEBI" id="CHEBI:15378"/>
        <dbReference type="ChEBI" id="CHEBI:29969"/>
        <dbReference type="ChEBI" id="CHEBI:30616"/>
        <dbReference type="ChEBI" id="CHEBI:33019"/>
        <dbReference type="ChEBI" id="CHEBI:83088"/>
        <dbReference type="ChEBI" id="CHEBI:83099"/>
        <dbReference type="ChEBI" id="CHEBI:456215"/>
        <dbReference type="EC" id="6.3.1.20"/>
    </reaction>
</comment>
<comment type="pathway">
    <text evidence="1">Protein modification; protein lipoylation via exogenous pathway; protein N(6)-(lipoyl)lysine from lipoate: step 1/2.</text>
</comment>
<comment type="pathway">
    <text evidence="1">Protein modification; protein lipoylation via exogenous pathway; protein N(6)-(lipoyl)lysine from lipoate: step 2/2.</text>
</comment>
<comment type="subunit">
    <text evidence="1">Monomer.</text>
</comment>
<comment type="subcellular location">
    <subcellularLocation>
        <location evidence="1">Cytoplasm</location>
    </subcellularLocation>
</comment>
<comment type="miscellaneous">
    <text evidence="1">In the transfer reaction, the free carboxyl group of lipoic acid is attached via an amide linkage to the epsilon-amino group of a specific lysine residue of lipoyl domains of lipoate-dependent enzymes.</text>
</comment>
<comment type="similarity">
    <text evidence="1">Belongs to the LplA family.</text>
</comment>
<sequence>MSTLRLLISDSYDPWFNLAVEECIFRQMPATQRVLFLWRNADTVVIGRAQNPWKECNTRRMEVDNVRLARRSSGGGAVFHDLGNTCFTFMAGKPEYDKTISTSIVLNALNALGVSAEASGRNDLVVKTVEGDRKVSGSAYRETKDRGFHHGTLLLNADLSRLANYLNPDKKKLAAKGITSVRSRVTNLTELLPGITHEQVCEAITKAFFAHYGERVEAEIISPDKTPDLPNFAETFARQSSWEWNFGQAPAFSHLLDERFSWGGVELHFDVEKGHITRAQVFTDSLNPAPLEAFAGRLQGCLYRADMLQQECEALLVDFPDQEKELRELSTWIAGAVR</sequence>
<feature type="chain" id="PRO_1000069389" description="Lipoate-protein ligase A">
    <location>
        <begin position="1"/>
        <end position="338"/>
    </location>
</feature>
<feature type="domain" description="BPL/LPL catalytic" evidence="2">
    <location>
        <begin position="29"/>
        <end position="216"/>
    </location>
</feature>
<feature type="binding site" evidence="1">
    <location>
        <position position="71"/>
    </location>
    <ligand>
        <name>ATP</name>
        <dbReference type="ChEBI" id="CHEBI:30616"/>
    </ligand>
</feature>
<feature type="binding site" evidence="1">
    <location>
        <begin position="76"/>
        <end position="79"/>
    </location>
    <ligand>
        <name>ATP</name>
        <dbReference type="ChEBI" id="CHEBI:30616"/>
    </ligand>
</feature>
<feature type="binding site" evidence="1">
    <location>
        <position position="134"/>
    </location>
    <ligand>
        <name>(R)-lipoate</name>
        <dbReference type="ChEBI" id="CHEBI:83088"/>
    </ligand>
</feature>
<feature type="binding site" evidence="1">
    <location>
        <position position="134"/>
    </location>
    <ligand>
        <name>ATP</name>
        <dbReference type="ChEBI" id="CHEBI:30616"/>
    </ligand>
</feature>
<evidence type="ECO:0000255" key="1">
    <source>
        <dbReference type="HAMAP-Rule" id="MF_01602"/>
    </source>
</evidence>
<evidence type="ECO:0000255" key="2">
    <source>
        <dbReference type="PROSITE-ProRule" id="PRU01067"/>
    </source>
</evidence>
<dbReference type="EC" id="6.3.1.20" evidence="1"/>
<dbReference type="EMBL" id="CP000034">
    <property type="protein sequence ID" value="ABB64496.1"/>
    <property type="molecule type" value="Genomic_DNA"/>
</dbReference>
<dbReference type="RefSeq" id="WP_000105898.1">
    <property type="nucleotide sequence ID" value="NC_007606.1"/>
</dbReference>
<dbReference type="RefSeq" id="YP_405987.1">
    <property type="nucleotide sequence ID" value="NC_007606.1"/>
</dbReference>
<dbReference type="SMR" id="Q327K9"/>
<dbReference type="STRING" id="300267.SDY_4647"/>
<dbReference type="EnsemblBacteria" id="ABB64496">
    <property type="protein sequence ID" value="ABB64496"/>
    <property type="gene ID" value="SDY_4647"/>
</dbReference>
<dbReference type="KEGG" id="sdy:SDY_4647"/>
<dbReference type="PATRIC" id="fig|300267.13.peg.5509"/>
<dbReference type="HOGENOM" id="CLU_022986_0_1_6"/>
<dbReference type="UniPathway" id="UPA00537">
    <property type="reaction ID" value="UER00594"/>
</dbReference>
<dbReference type="UniPathway" id="UPA00537">
    <property type="reaction ID" value="UER00595"/>
</dbReference>
<dbReference type="Proteomes" id="UP000002716">
    <property type="component" value="Chromosome"/>
</dbReference>
<dbReference type="GO" id="GO:0005829">
    <property type="term" value="C:cytosol"/>
    <property type="evidence" value="ECO:0007669"/>
    <property type="project" value="TreeGrafter"/>
</dbReference>
<dbReference type="GO" id="GO:0005524">
    <property type="term" value="F:ATP binding"/>
    <property type="evidence" value="ECO:0007669"/>
    <property type="project" value="UniProtKB-KW"/>
</dbReference>
<dbReference type="GO" id="GO:0016979">
    <property type="term" value="F:lipoate-protein ligase activity"/>
    <property type="evidence" value="ECO:0007669"/>
    <property type="project" value="UniProtKB-UniRule"/>
</dbReference>
<dbReference type="GO" id="GO:0017118">
    <property type="term" value="F:lipoyltransferase activity"/>
    <property type="evidence" value="ECO:0007669"/>
    <property type="project" value="TreeGrafter"/>
</dbReference>
<dbReference type="GO" id="GO:0036211">
    <property type="term" value="P:protein modification process"/>
    <property type="evidence" value="ECO:0007669"/>
    <property type="project" value="InterPro"/>
</dbReference>
<dbReference type="CDD" id="cd16435">
    <property type="entry name" value="BPL_LplA_LipB"/>
    <property type="match status" value="1"/>
</dbReference>
<dbReference type="FunFam" id="3.30.390.50:FF:000002">
    <property type="entry name" value="Lipoate-protein ligase A"/>
    <property type="match status" value="1"/>
</dbReference>
<dbReference type="FunFam" id="3.30.930.10:FF:000024">
    <property type="entry name" value="Lipoate-protein ligase A"/>
    <property type="match status" value="1"/>
</dbReference>
<dbReference type="Gene3D" id="3.30.930.10">
    <property type="entry name" value="Bira Bifunctional Protein, Domain 2"/>
    <property type="match status" value="1"/>
</dbReference>
<dbReference type="Gene3D" id="3.30.390.50">
    <property type="entry name" value="CO dehydrogenase flavoprotein, C-terminal domain"/>
    <property type="match status" value="1"/>
</dbReference>
<dbReference type="HAMAP" id="MF_01602">
    <property type="entry name" value="LplA"/>
    <property type="match status" value="1"/>
</dbReference>
<dbReference type="InterPro" id="IPR045864">
    <property type="entry name" value="aa-tRNA-synth_II/BPL/LPL"/>
</dbReference>
<dbReference type="InterPro" id="IPR004143">
    <property type="entry name" value="BPL_LPL_catalytic"/>
</dbReference>
<dbReference type="InterPro" id="IPR023741">
    <property type="entry name" value="Lipoate_ligase_A"/>
</dbReference>
<dbReference type="InterPro" id="IPR019491">
    <property type="entry name" value="Lipoate_protein_ligase_C"/>
</dbReference>
<dbReference type="InterPro" id="IPR004562">
    <property type="entry name" value="LipoylTrfase_LipoateP_Ligase"/>
</dbReference>
<dbReference type="NCBIfam" id="TIGR00545">
    <property type="entry name" value="lipoyltrans"/>
    <property type="match status" value="1"/>
</dbReference>
<dbReference type="PANTHER" id="PTHR12561">
    <property type="entry name" value="LIPOATE-PROTEIN LIGASE"/>
    <property type="match status" value="1"/>
</dbReference>
<dbReference type="PANTHER" id="PTHR12561:SF3">
    <property type="entry name" value="LIPOYLTRANSFERASE 1, MITOCHONDRIAL"/>
    <property type="match status" value="1"/>
</dbReference>
<dbReference type="Pfam" id="PF10437">
    <property type="entry name" value="Lip_prot_lig_C"/>
    <property type="match status" value="1"/>
</dbReference>
<dbReference type="Pfam" id="PF21948">
    <property type="entry name" value="LplA-B_cat"/>
    <property type="match status" value="1"/>
</dbReference>
<dbReference type="SUPFAM" id="SSF55681">
    <property type="entry name" value="Class II aaRS and biotin synthetases"/>
    <property type="match status" value="1"/>
</dbReference>
<dbReference type="SUPFAM" id="SSF82649">
    <property type="entry name" value="SufE/NifU"/>
    <property type="match status" value="1"/>
</dbReference>
<dbReference type="PROSITE" id="PS51733">
    <property type="entry name" value="BPL_LPL_CATALYTIC"/>
    <property type="match status" value="1"/>
</dbReference>
<reference key="1">
    <citation type="journal article" date="2005" name="Nucleic Acids Res.">
        <title>Genome dynamics and diversity of Shigella species, the etiologic agents of bacillary dysentery.</title>
        <authorList>
            <person name="Yang F."/>
            <person name="Yang J."/>
            <person name="Zhang X."/>
            <person name="Chen L."/>
            <person name="Jiang Y."/>
            <person name="Yan Y."/>
            <person name="Tang X."/>
            <person name="Wang J."/>
            <person name="Xiong Z."/>
            <person name="Dong J."/>
            <person name="Xue Y."/>
            <person name="Zhu Y."/>
            <person name="Xu X."/>
            <person name="Sun L."/>
            <person name="Chen S."/>
            <person name="Nie H."/>
            <person name="Peng J."/>
            <person name="Xu J."/>
            <person name="Wang Y."/>
            <person name="Yuan Z."/>
            <person name="Wen Y."/>
            <person name="Yao Z."/>
            <person name="Shen Y."/>
            <person name="Qiang B."/>
            <person name="Hou Y."/>
            <person name="Yu J."/>
            <person name="Jin Q."/>
        </authorList>
    </citation>
    <scope>NUCLEOTIDE SEQUENCE [LARGE SCALE GENOMIC DNA]</scope>
    <source>
        <strain>Sd197</strain>
    </source>
</reference>
<organism>
    <name type="scientific">Shigella dysenteriae serotype 1 (strain Sd197)</name>
    <dbReference type="NCBI Taxonomy" id="300267"/>
    <lineage>
        <taxon>Bacteria</taxon>
        <taxon>Pseudomonadati</taxon>
        <taxon>Pseudomonadota</taxon>
        <taxon>Gammaproteobacteria</taxon>
        <taxon>Enterobacterales</taxon>
        <taxon>Enterobacteriaceae</taxon>
        <taxon>Shigella</taxon>
    </lineage>
</organism>
<gene>
    <name evidence="1" type="primary">lplA</name>
    <name type="ordered locus">SDY_4647</name>
</gene>
<proteinExistence type="inferred from homology"/>
<protein>
    <recommendedName>
        <fullName evidence="1">Lipoate-protein ligase A</fullName>
        <ecNumber evidence="1">6.3.1.20</ecNumber>
    </recommendedName>
    <alternativeName>
        <fullName evidence="1">Lipoate--protein ligase</fullName>
    </alternativeName>
</protein>
<keyword id="KW-0067">ATP-binding</keyword>
<keyword id="KW-0963">Cytoplasm</keyword>
<keyword id="KW-0436">Ligase</keyword>
<keyword id="KW-0547">Nucleotide-binding</keyword>
<keyword id="KW-1185">Reference proteome</keyword>
<accession>Q327K9</accession>